<organism>
    <name type="scientific">Coprothermobacter proteolyticus (strain ATCC 35245 / DSM 5265 / OCM 4 / BT)</name>
    <dbReference type="NCBI Taxonomy" id="309798"/>
    <lineage>
        <taxon>Bacteria</taxon>
        <taxon>Pseudomonadati</taxon>
        <taxon>Coprothermobacterota</taxon>
        <taxon>Coprothermobacteria</taxon>
        <taxon>Coprothermobacterales</taxon>
        <taxon>Coprothermobacteraceae</taxon>
        <taxon>Coprothermobacter</taxon>
    </lineage>
</organism>
<dbReference type="EC" id="1.5.1.5" evidence="1"/>
<dbReference type="EC" id="3.5.4.9" evidence="1"/>
<dbReference type="EMBL" id="CP001145">
    <property type="protein sequence ID" value="ACI17076.1"/>
    <property type="molecule type" value="Genomic_DNA"/>
</dbReference>
<dbReference type="RefSeq" id="WP_012543728.1">
    <property type="nucleotide sequence ID" value="NC_011295.1"/>
</dbReference>
<dbReference type="SMR" id="B5Y9D1"/>
<dbReference type="STRING" id="309798.COPRO5265_1066"/>
<dbReference type="KEGG" id="cpo:COPRO5265_1066"/>
<dbReference type="eggNOG" id="COG0190">
    <property type="taxonomic scope" value="Bacteria"/>
</dbReference>
<dbReference type="HOGENOM" id="CLU_034045_2_1_9"/>
<dbReference type="OrthoDB" id="9803580at2"/>
<dbReference type="UniPathway" id="UPA00193"/>
<dbReference type="Proteomes" id="UP000001732">
    <property type="component" value="Chromosome"/>
</dbReference>
<dbReference type="GO" id="GO:0005829">
    <property type="term" value="C:cytosol"/>
    <property type="evidence" value="ECO:0007669"/>
    <property type="project" value="TreeGrafter"/>
</dbReference>
<dbReference type="GO" id="GO:0004477">
    <property type="term" value="F:methenyltetrahydrofolate cyclohydrolase activity"/>
    <property type="evidence" value="ECO:0007669"/>
    <property type="project" value="UniProtKB-UniRule"/>
</dbReference>
<dbReference type="GO" id="GO:0004488">
    <property type="term" value="F:methylenetetrahydrofolate dehydrogenase (NADP+) activity"/>
    <property type="evidence" value="ECO:0007669"/>
    <property type="project" value="UniProtKB-UniRule"/>
</dbReference>
<dbReference type="GO" id="GO:0000105">
    <property type="term" value="P:L-histidine biosynthetic process"/>
    <property type="evidence" value="ECO:0007669"/>
    <property type="project" value="UniProtKB-KW"/>
</dbReference>
<dbReference type="GO" id="GO:0009086">
    <property type="term" value="P:methionine biosynthetic process"/>
    <property type="evidence" value="ECO:0007669"/>
    <property type="project" value="UniProtKB-KW"/>
</dbReference>
<dbReference type="GO" id="GO:0006164">
    <property type="term" value="P:purine nucleotide biosynthetic process"/>
    <property type="evidence" value="ECO:0007669"/>
    <property type="project" value="UniProtKB-KW"/>
</dbReference>
<dbReference type="GO" id="GO:0035999">
    <property type="term" value="P:tetrahydrofolate interconversion"/>
    <property type="evidence" value="ECO:0007669"/>
    <property type="project" value="UniProtKB-UniRule"/>
</dbReference>
<dbReference type="CDD" id="cd01080">
    <property type="entry name" value="NAD_bind_m-THF_DH_Cyclohyd"/>
    <property type="match status" value="1"/>
</dbReference>
<dbReference type="Gene3D" id="3.40.50.10860">
    <property type="entry name" value="Leucine Dehydrogenase, chain A, domain 1"/>
    <property type="match status" value="1"/>
</dbReference>
<dbReference type="Gene3D" id="3.40.50.720">
    <property type="entry name" value="NAD(P)-binding Rossmann-like Domain"/>
    <property type="match status" value="1"/>
</dbReference>
<dbReference type="HAMAP" id="MF_01576">
    <property type="entry name" value="THF_DHG_CYH"/>
    <property type="match status" value="1"/>
</dbReference>
<dbReference type="InterPro" id="IPR046346">
    <property type="entry name" value="Aminoacid_DH-like_N_sf"/>
</dbReference>
<dbReference type="InterPro" id="IPR036291">
    <property type="entry name" value="NAD(P)-bd_dom_sf"/>
</dbReference>
<dbReference type="InterPro" id="IPR000672">
    <property type="entry name" value="THF_DH/CycHdrlase"/>
</dbReference>
<dbReference type="InterPro" id="IPR020630">
    <property type="entry name" value="THF_DH/CycHdrlase_cat_dom"/>
</dbReference>
<dbReference type="InterPro" id="IPR020631">
    <property type="entry name" value="THF_DH/CycHdrlase_NAD-bd_dom"/>
</dbReference>
<dbReference type="PANTHER" id="PTHR48099:SF5">
    <property type="entry name" value="C-1-TETRAHYDROFOLATE SYNTHASE, CYTOPLASMIC"/>
    <property type="match status" value="1"/>
</dbReference>
<dbReference type="PANTHER" id="PTHR48099">
    <property type="entry name" value="C-1-TETRAHYDROFOLATE SYNTHASE, CYTOPLASMIC-RELATED"/>
    <property type="match status" value="1"/>
</dbReference>
<dbReference type="Pfam" id="PF00763">
    <property type="entry name" value="THF_DHG_CYH"/>
    <property type="match status" value="1"/>
</dbReference>
<dbReference type="Pfam" id="PF02882">
    <property type="entry name" value="THF_DHG_CYH_C"/>
    <property type="match status" value="1"/>
</dbReference>
<dbReference type="PRINTS" id="PR00085">
    <property type="entry name" value="THFDHDRGNASE"/>
</dbReference>
<dbReference type="SUPFAM" id="SSF53223">
    <property type="entry name" value="Aminoacid dehydrogenase-like, N-terminal domain"/>
    <property type="match status" value="1"/>
</dbReference>
<dbReference type="SUPFAM" id="SSF51735">
    <property type="entry name" value="NAD(P)-binding Rossmann-fold domains"/>
    <property type="match status" value="1"/>
</dbReference>
<reference key="1">
    <citation type="submission" date="2008-08" db="EMBL/GenBank/DDBJ databases">
        <title>The complete genome sequence of Coprothermobacter proteolyticus strain ATCC 5245 / DSM 5265 / BT.</title>
        <authorList>
            <person name="Dodson R.J."/>
            <person name="Durkin A.S."/>
            <person name="Wu M."/>
            <person name="Eisen J."/>
            <person name="Sutton G."/>
        </authorList>
    </citation>
    <scope>NUCLEOTIDE SEQUENCE [LARGE SCALE GENOMIC DNA]</scope>
    <source>
        <strain>ATCC 35245 / DSM 5265 / OCM 4 / BT</strain>
    </source>
</reference>
<keyword id="KW-0028">Amino-acid biosynthesis</keyword>
<keyword id="KW-0368">Histidine biosynthesis</keyword>
<keyword id="KW-0378">Hydrolase</keyword>
<keyword id="KW-0486">Methionine biosynthesis</keyword>
<keyword id="KW-0511">Multifunctional enzyme</keyword>
<keyword id="KW-0521">NADP</keyword>
<keyword id="KW-0554">One-carbon metabolism</keyword>
<keyword id="KW-0560">Oxidoreductase</keyword>
<keyword id="KW-0658">Purine biosynthesis</keyword>
<keyword id="KW-1185">Reference proteome</keyword>
<protein>
    <recommendedName>
        <fullName evidence="1">Bifunctional protein FolD</fullName>
    </recommendedName>
    <domain>
        <recommendedName>
            <fullName evidence="1">Methylenetetrahydrofolate dehydrogenase</fullName>
            <ecNumber evidence="1">1.5.1.5</ecNumber>
        </recommendedName>
    </domain>
    <domain>
        <recommendedName>
            <fullName evidence="1">Methenyltetrahydrofolate cyclohydrolase</fullName>
            <ecNumber evidence="1">3.5.4.9</ecNumber>
        </recommendedName>
    </domain>
</protein>
<accession>B5Y9D1</accession>
<name>FOLD_COPPD</name>
<gene>
    <name evidence="1" type="primary">folD</name>
    <name type="ordered locus">COPRO5265_1066</name>
</gene>
<evidence type="ECO:0000255" key="1">
    <source>
        <dbReference type="HAMAP-Rule" id="MF_01576"/>
    </source>
</evidence>
<sequence>MALIMKGKPVADAIYEELQPMTSLNLTLGIIKYKGSDAGGYLSGLSKAAQRLNVQLRVNEVEQFQELTQSVVVMGKDSQVHGILLLKPFPKEWNFRQASDLIPPEKDVDALHPVNLGKLAQGRGNLVPATPQAVLSILDFYNVLPLEGASALVIGRSEAVGLPAFLQLMQRNATVTVAHSRTKDLPSLSRQADLVVVAVGKPNFLTKDHVKEGAVVIDVGTNVLEDGKVVGDVDRENVEPLVRAITPVPGGVGSVTTACLFKNLFLCYQEQTR</sequence>
<comment type="function">
    <text evidence="1">Catalyzes the oxidation of 5,10-methylenetetrahydrofolate to 5,10-methenyltetrahydrofolate and then the hydrolysis of 5,10-methenyltetrahydrofolate to 10-formyltetrahydrofolate.</text>
</comment>
<comment type="catalytic activity">
    <reaction evidence="1">
        <text>(6R)-5,10-methylene-5,6,7,8-tetrahydrofolate + NADP(+) = (6R)-5,10-methenyltetrahydrofolate + NADPH</text>
        <dbReference type="Rhea" id="RHEA:22812"/>
        <dbReference type="ChEBI" id="CHEBI:15636"/>
        <dbReference type="ChEBI" id="CHEBI:57455"/>
        <dbReference type="ChEBI" id="CHEBI:57783"/>
        <dbReference type="ChEBI" id="CHEBI:58349"/>
        <dbReference type="EC" id="1.5.1.5"/>
    </reaction>
</comment>
<comment type="catalytic activity">
    <reaction evidence="1">
        <text>(6R)-5,10-methenyltetrahydrofolate + H2O = (6R)-10-formyltetrahydrofolate + H(+)</text>
        <dbReference type="Rhea" id="RHEA:23700"/>
        <dbReference type="ChEBI" id="CHEBI:15377"/>
        <dbReference type="ChEBI" id="CHEBI:15378"/>
        <dbReference type="ChEBI" id="CHEBI:57455"/>
        <dbReference type="ChEBI" id="CHEBI:195366"/>
        <dbReference type="EC" id="3.5.4.9"/>
    </reaction>
</comment>
<comment type="pathway">
    <text evidence="1">One-carbon metabolism; tetrahydrofolate interconversion.</text>
</comment>
<comment type="subunit">
    <text evidence="1">Homodimer.</text>
</comment>
<comment type="similarity">
    <text evidence="1">Belongs to the tetrahydrofolate dehydrogenase/cyclohydrolase family.</text>
</comment>
<feature type="chain" id="PRO_1000196757" description="Bifunctional protein FolD">
    <location>
        <begin position="1"/>
        <end position="273"/>
    </location>
</feature>
<feature type="binding site" evidence="1">
    <location>
        <begin position="155"/>
        <end position="157"/>
    </location>
    <ligand>
        <name>NADP(+)</name>
        <dbReference type="ChEBI" id="CHEBI:58349"/>
    </ligand>
</feature>
<feature type="binding site" evidence="1">
    <location>
        <position position="180"/>
    </location>
    <ligand>
        <name>NADP(+)</name>
        <dbReference type="ChEBI" id="CHEBI:58349"/>
    </ligand>
</feature>
<feature type="binding site" evidence="1">
    <location>
        <position position="221"/>
    </location>
    <ligand>
        <name>NADP(+)</name>
        <dbReference type="ChEBI" id="CHEBI:58349"/>
    </ligand>
</feature>
<proteinExistence type="inferred from homology"/>